<gene>
    <name type="primary">cynT</name>
    <name type="ordered locus">jhp_0004</name>
</gene>
<protein>
    <recommendedName>
        <fullName>Carbonic anhydrase</fullName>
        <ecNumber>4.2.1.1</ecNumber>
    </recommendedName>
    <alternativeName>
        <fullName>Carbonate dehydratase</fullName>
    </alternativeName>
</protein>
<name>CYNT_HELPJ</name>
<evidence type="ECO:0000250" key="1"/>
<evidence type="ECO:0000305" key="2"/>
<organism>
    <name type="scientific">Helicobacter pylori (strain J99 / ATCC 700824)</name>
    <name type="common">Campylobacter pylori J99</name>
    <dbReference type="NCBI Taxonomy" id="85963"/>
    <lineage>
        <taxon>Bacteria</taxon>
        <taxon>Pseudomonadati</taxon>
        <taxon>Campylobacterota</taxon>
        <taxon>Epsilonproteobacteria</taxon>
        <taxon>Campylobacterales</taxon>
        <taxon>Helicobacteraceae</taxon>
        <taxon>Helicobacter</taxon>
    </lineage>
</organism>
<proteinExistence type="inferred from homology"/>
<sequence>MEAFLGALEFQENEYEEFKELYESLKTKQKPHTLFISCVDSRVVPNLITGTQPGELYVIRNMGNVIPPKTSYKESLSTIASVEYAIAHVGVQNLIICGHSDCGACGSIHLIHDETTKAKTPYIANWIQFLEPIKEELKNHPQFSNHFAKRSWLTERLNARLQLNNLLSYDFIQERVINNELKIFGWHYIIETGRIYNYNFESHFFEPIEETIKQRISHENF</sequence>
<dbReference type="EC" id="4.2.1.1"/>
<dbReference type="EMBL" id="AE001439">
    <property type="protein sequence ID" value="AAD05588.1"/>
    <property type="molecule type" value="Genomic_DNA"/>
</dbReference>
<dbReference type="PIR" id="F71985">
    <property type="entry name" value="F71985"/>
</dbReference>
<dbReference type="RefSeq" id="WP_000387094.1">
    <property type="nucleotide sequence ID" value="NC_000921.1"/>
</dbReference>
<dbReference type="SMR" id="Q9ZN54"/>
<dbReference type="KEGG" id="hpj:jhp_0004"/>
<dbReference type="PATRIC" id="fig|85963.30.peg.1041"/>
<dbReference type="eggNOG" id="COG0288">
    <property type="taxonomic scope" value="Bacteria"/>
</dbReference>
<dbReference type="Proteomes" id="UP000000804">
    <property type="component" value="Chromosome"/>
</dbReference>
<dbReference type="GO" id="GO:0004089">
    <property type="term" value="F:carbonate dehydratase activity"/>
    <property type="evidence" value="ECO:0007669"/>
    <property type="project" value="UniProtKB-EC"/>
</dbReference>
<dbReference type="GO" id="GO:0008270">
    <property type="term" value="F:zinc ion binding"/>
    <property type="evidence" value="ECO:0007669"/>
    <property type="project" value="InterPro"/>
</dbReference>
<dbReference type="GO" id="GO:0015976">
    <property type="term" value="P:carbon utilization"/>
    <property type="evidence" value="ECO:0007669"/>
    <property type="project" value="InterPro"/>
</dbReference>
<dbReference type="CDD" id="cd00884">
    <property type="entry name" value="beta_CA_cladeB"/>
    <property type="match status" value="1"/>
</dbReference>
<dbReference type="Gene3D" id="3.40.1050.10">
    <property type="entry name" value="Carbonic anhydrase"/>
    <property type="match status" value="1"/>
</dbReference>
<dbReference type="InterPro" id="IPR045066">
    <property type="entry name" value="Beta_CA_cladeB"/>
</dbReference>
<dbReference type="InterPro" id="IPR001765">
    <property type="entry name" value="Carbonic_anhydrase"/>
</dbReference>
<dbReference type="InterPro" id="IPR015892">
    <property type="entry name" value="Carbonic_anhydrase_CS"/>
</dbReference>
<dbReference type="InterPro" id="IPR036874">
    <property type="entry name" value="Carbonic_anhydrase_sf"/>
</dbReference>
<dbReference type="PANTHER" id="PTHR11002">
    <property type="entry name" value="CARBONIC ANHYDRASE"/>
    <property type="match status" value="1"/>
</dbReference>
<dbReference type="PANTHER" id="PTHR11002:SF76">
    <property type="entry name" value="CARBONIC ANHYDRASE"/>
    <property type="match status" value="1"/>
</dbReference>
<dbReference type="Pfam" id="PF00484">
    <property type="entry name" value="Pro_CA"/>
    <property type="match status" value="1"/>
</dbReference>
<dbReference type="SMART" id="SM00947">
    <property type="entry name" value="Pro_CA"/>
    <property type="match status" value="1"/>
</dbReference>
<dbReference type="SUPFAM" id="SSF53056">
    <property type="entry name" value="beta-carbonic anhydrase, cab"/>
    <property type="match status" value="1"/>
</dbReference>
<dbReference type="PROSITE" id="PS00705">
    <property type="entry name" value="PROK_CO2_ANHYDRASE_2"/>
    <property type="match status" value="1"/>
</dbReference>
<reference key="1">
    <citation type="journal article" date="1999" name="Nature">
        <title>Genomic sequence comparison of two unrelated isolates of the human gastric pathogen Helicobacter pylori.</title>
        <authorList>
            <person name="Alm R.A."/>
            <person name="Ling L.-S.L."/>
            <person name="Moir D.T."/>
            <person name="King B.L."/>
            <person name="Brown E.D."/>
            <person name="Doig P.C."/>
            <person name="Smith D.R."/>
            <person name="Noonan B."/>
            <person name="Guild B.C."/>
            <person name="deJonge B.L."/>
            <person name="Carmel G."/>
            <person name="Tummino P.J."/>
            <person name="Caruso A."/>
            <person name="Uria-Nickelsen M."/>
            <person name="Mills D.M."/>
            <person name="Ives C."/>
            <person name="Gibson R."/>
            <person name="Merberg D."/>
            <person name="Mills S.D."/>
            <person name="Jiang Q."/>
            <person name="Taylor D.E."/>
            <person name="Vovis G.F."/>
            <person name="Trust T.J."/>
        </authorList>
    </citation>
    <scope>NUCLEOTIDE SEQUENCE [LARGE SCALE GENOMIC DNA]</scope>
    <source>
        <strain>J99 / ATCC 700824</strain>
    </source>
</reference>
<keyword id="KW-0456">Lyase</keyword>
<keyword id="KW-0479">Metal-binding</keyword>
<keyword id="KW-0862">Zinc</keyword>
<accession>Q9ZN54</accession>
<comment type="catalytic activity">
    <reaction>
        <text>hydrogencarbonate + H(+) = CO2 + H2O</text>
        <dbReference type="Rhea" id="RHEA:10748"/>
        <dbReference type="ChEBI" id="CHEBI:15377"/>
        <dbReference type="ChEBI" id="CHEBI:15378"/>
        <dbReference type="ChEBI" id="CHEBI:16526"/>
        <dbReference type="ChEBI" id="CHEBI:17544"/>
        <dbReference type="EC" id="4.2.1.1"/>
    </reaction>
</comment>
<comment type="cofactor">
    <cofactor evidence="1">
        <name>Zn(2+)</name>
        <dbReference type="ChEBI" id="CHEBI:29105"/>
    </cofactor>
    <text evidence="1">Binds 1 zinc ion per subunit.</text>
</comment>
<comment type="similarity">
    <text evidence="2">Belongs to the beta-class carbonic anhydrase family.</text>
</comment>
<feature type="chain" id="PRO_0000077462" description="Carbonic anhydrase">
    <location>
        <begin position="1"/>
        <end position="221"/>
    </location>
</feature>
<feature type="binding site" evidence="1">
    <location>
        <position position="38"/>
    </location>
    <ligand>
        <name>Zn(2+)</name>
        <dbReference type="ChEBI" id="CHEBI:29105"/>
    </ligand>
</feature>
<feature type="binding site" evidence="1">
    <location>
        <position position="40"/>
    </location>
    <ligand>
        <name>Zn(2+)</name>
        <dbReference type="ChEBI" id="CHEBI:29105"/>
    </ligand>
</feature>
<feature type="binding site" evidence="1">
    <location>
        <position position="99"/>
    </location>
    <ligand>
        <name>Zn(2+)</name>
        <dbReference type="ChEBI" id="CHEBI:29105"/>
    </ligand>
</feature>
<feature type="binding site" evidence="1">
    <location>
        <position position="102"/>
    </location>
    <ligand>
        <name>Zn(2+)</name>
        <dbReference type="ChEBI" id="CHEBI:29105"/>
    </ligand>
</feature>